<accession>A5GWV7</accession>
<name>URE1_SYNR3</name>
<comment type="catalytic activity">
    <reaction evidence="1">
        <text>urea + 2 H2O + H(+) = hydrogencarbonate + 2 NH4(+)</text>
        <dbReference type="Rhea" id="RHEA:20557"/>
        <dbReference type="ChEBI" id="CHEBI:15377"/>
        <dbReference type="ChEBI" id="CHEBI:15378"/>
        <dbReference type="ChEBI" id="CHEBI:16199"/>
        <dbReference type="ChEBI" id="CHEBI:17544"/>
        <dbReference type="ChEBI" id="CHEBI:28938"/>
        <dbReference type="EC" id="3.5.1.5"/>
    </reaction>
</comment>
<comment type="cofactor">
    <cofactor evidence="1">
        <name>Ni cation</name>
        <dbReference type="ChEBI" id="CHEBI:25516"/>
    </cofactor>
    <text evidence="1">Binds 2 nickel ions per subunit.</text>
</comment>
<comment type="pathway">
    <text evidence="1">Nitrogen metabolism; urea degradation; CO(2) and NH(3) from urea (urease route): step 1/1.</text>
</comment>
<comment type="subunit">
    <text evidence="1">Heterotrimer of UreA (gamma), UreB (beta) and UreC (alpha) subunits. Three heterotrimers associate to form the active enzyme.</text>
</comment>
<comment type="subcellular location">
    <subcellularLocation>
        <location evidence="1">Cytoplasm</location>
    </subcellularLocation>
</comment>
<comment type="PTM">
    <text evidence="1">Carboxylation allows a single lysine to coordinate two nickel ions.</text>
</comment>
<comment type="similarity">
    <text evidence="1">Belongs to the metallo-dependent hydrolases superfamily. Urease alpha subunit family.</text>
</comment>
<protein>
    <recommendedName>
        <fullName evidence="1">Urease subunit alpha</fullName>
        <ecNumber evidence="1">3.5.1.5</ecNumber>
    </recommendedName>
    <alternativeName>
        <fullName evidence="1">Urea amidohydrolase subunit alpha</fullName>
    </alternativeName>
</protein>
<dbReference type="EC" id="3.5.1.5" evidence="1"/>
<dbReference type="EMBL" id="CT978603">
    <property type="protein sequence ID" value="CAK29366.1"/>
    <property type="molecule type" value="Genomic_DNA"/>
</dbReference>
<dbReference type="SMR" id="A5GWV7"/>
<dbReference type="STRING" id="316278.SynRCC307_2463"/>
<dbReference type="KEGG" id="syr:SynRCC307_2463"/>
<dbReference type="eggNOG" id="COG0804">
    <property type="taxonomic scope" value="Bacteria"/>
</dbReference>
<dbReference type="HOGENOM" id="CLU_000980_0_0_3"/>
<dbReference type="OrthoDB" id="9802793at2"/>
<dbReference type="UniPathway" id="UPA00258">
    <property type="reaction ID" value="UER00370"/>
</dbReference>
<dbReference type="Proteomes" id="UP000001115">
    <property type="component" value="Chromosome"/>
</dbReference>
<dbReference type="GO" id="GO:0005737">
    <property type="term" value="C:cytoplasm"/>
    <property type="evidence" value="ECO:0007669"/>
    <property type="project" value="UniProtKB-SubCell"/>
</dbReference>
<dbReference type="GO" id="GO:0016151">
    <property type="term" value="F:nickel cation binding"/>
    <property type="evidence" value="ECO:0007669"/>
    <property type="project" value="UniProtKB-UniRule"/>
</dbReference>
<dbReference type="GO" id="GO:0009039">
    <property type="term" value="F:urease activity"/>
    <property type="evidence" value="ECO:0007669"/>
    <property type="project" value="UniProtKB-UniRule"/>
</dbReference>
<dbReference type="GO" id="GO:0043419">
    <property type="term" value="P:urea catabolic process"/>
    <property type="evidence" value="ECO:0007669"/>
    <property type="project" value="UniProtKB-UniRule"/>
</dbReference>
<dbReference type="CDD" id="cd00375">
    <property type="entry name" value="Urease_alpha"/>
    <property type="match status" value="1"/>
</dbReference>
<dbReference type="Gene3D" id="3.20.20.140">
    <property type="entry name" value="Metal-dependent hydrolases"/>
    <property type="match status" value="1"/>
</dbReference>
<dbReference type="Gene3D" id="2.30.40.10">
    <property type="entry name" value="Urease, subunit C, domain 1"/>
    <property type="match status" value="1"/>
</dbReference>
<dbReference type="HAMAP" id="MF_01953">
    <property type="entry name" value="Urease_alpha"/>
    <property type="match status" value="1"/>
</dbReference>
<dbReference type="InterPro" id="IPR006680">
    <property type="entry name" value="Amidohydro-rel"/>
</dbReference>
<dbReference type="InterPro" id="IPR011059">
    <property type="entry name" value="Metal-dep_hydrolase_composite"/>
</dbReference>
<dbReference type="InterPro" id="IPR032466">
    <property type="entry name" value="Metal_Hydrolase"/>
</dbReference>
<dbReference type="InterPro" id="IPR011612">
    <property type="entry name" value="Urease_alpha_N_dom"/>
</dbReference>
<dbReference type="InterPro" id="IPR050112">
    <property type="entry name" value="Urease_alpha_subunit"/>
</dbReference>
<dbReference type="InterPro" id="IPR017950">
    <property type="entry name" value="Urease_AS"/>
</dbReference>
<dbReference type="InterPro" id="IPR005848">
    <property type="entry name" value="Urease_asu"/>
</dbReference>
<dbReference type="InterPro" id="IPR017951">
    <property type="entry name" value="Urease_asu_c"/>
</dbReference>
<dbReference type="InterPro" id="IPR029754">
    <property type="entry name" value="Urease_Ni-bd"/>
</dbReference>
<dbReference type="NCBIfam" id="NF009685">
    <property type="entry name" value="PRK13206.1"/>
    <property type="match status" value="1"/>
</dbReference>
<dbReference type="NCBIfam" id="NF009686">
    <property type="entry name" value="PRK13207.1"/>
    <property type="match status" value="1"/>
</dbReference>
<dbReference type="NCBIfam" id="TIGR01792">
    <property type="entry name" value="urease_alph"/>
    <property type="match status" value="1"/>
</dbReference>
<dbReference type="PANTHER" id="PTHR43440">
    <property type="entry name" value="UREASE"/>
    <property type="match status" value="1"/>
</dbReference>
<dbReference type="PANTHER" id="PTHR43440:SF1">
    <property type="entry name" value="UREASE"/>
    <property type="match status" value="1"/>
</dbReference>
<dbReference type="Pfam" id="PF01979">
    <property type="entry name" value="Amidohydro_1"/>
    <property type="match status" value="1"/>
</dbReference>
<dbReference type="Pfam" id="PF00449">
    <property type="entry name" value="Urease_alpha"/>
    <property type="match status" value="1"/>
</dbReference>
<dbReference type="PRINTS" id="PR01752">
    <property type="entry name" value="UREASE"/>
</dbReference>
<dbReference type="SUPFAM" id="SSF51338">
    <property type="entry name" value="Composite domain of metallo-dependent hydrolases"/>
    <property type="match status" value="2"/>
</dbReference>
<dbReference type="SUPFAM" id="SSF51556">
    <property type="entry name" value="Metallo-dependent hydrolases"/>
    <property type="match status" value="1"/>
</dbReference>
<dbReference type="PROSITE" id="PS01120">
    <property type="entry name" value="UREASE_1"/>
    <property type="match status" value="1"/>
</dbReference>
<dbReference type="PROSITE" id="PS00145">
    <property type="entry name" value="UREASE_2"/>
    <property type="match status" value="1"/>
</dbReference>
<dbReference type="PROSITE" id="PS51368">
    <property type="entry name" value="UREASE_3"/>
    <property type="match status" value="1"/>
</dbReference>
<gene>
    <name evidence="1" type="primary">ureC</name>
    <name type="ordered locus">SynRCC307_2463</name>
</gene>
<evidence type="ECO:0000255" key="1">
    <source>
        <dbReference type="HAMAP-Rule" id="MF_01953"/>
    </source>
</evidence>
<keyword id="KW-0963">Cytoplasm</keyword>
<keyword id="KW-0378">Hydrolase</keyword>
<keyword id="KW-0479">Metal-binding</keyword>
<keyword id="KW-0533">Nickel</keyword>
<keyword id="KW-1185">Reference proteome</keyword>
<feature type="chain" id="PRO_1000070700" description="Urease subunit alpha">
    <location>
        <begin position="1"/>
        <end position="569"/>
    </location>
</feature>
<feature type="domain" description="Urease" evidence="1">
    <location>
        <begin position="131"/>
        <end position="569"/>
    </location>
</feature>
<feature type="active site" description="Proton donor" evidence="1">
    <location>
        <position position="322"/>
    </location>
</feature>
<feature type="binding site" evidence="1">
    <location>
        <position position="136"/>
    </location>
    <ligand>
        <name>Ni(2+)</name>
        <dbReference type="ChEBI" id="CHEBI:49786"/>
        <label>1</label>
    </ligand>
</feature>
<feature type="binding site" evidence="1">
    <location>
        <position position="138"/>
    </location>
    <ligand>
        <name>Ni(2+)</name>
        <dbReference type="ChEBI" id="CHEBI:49786"/>
        <label>1</label>
    </ligand>
</feature>
<feature type="binding site" description="via carbamate group" evidence="1">
    <location>
        <position position="219"/>
    </location>
    <ligand>
        <name>Ni(2+)</name>
        <dbReference type="ChEBI" id="CHEBI:49786"/>
        <label>1</label>
    </ligand>
</feature>
<feature type="binding site" description="via carbamate group" evidence="1">
    <location>
        <position position="219"/>
    </location>
    <ligand>
        <name>Ni(2+)</name>
        <dbReference type="ChEBI" id="CHEBI:49786"/>
        <label>2</label>
    </ligand>
</feature>
<feature type="binding site" evidence="1">
    <location>
        <position position="221"/>
    </location>
    <ligand>
        <name>substrate</name>
    </ligand>
</feature>
<feature type="binding site" evidence="1">
    <location>
        <position position="248"/>
    </location>
    <ligand>
        <name>Ni(2+)</name>
        <dbReference type="ChEBI" id="CHEBI:49786"/>
        <label>2</label>
    </ligand>
</feature>
<feature type="binding site" evidence="1">
    <location>
        <position position="274"/>
    </location>
    <ligand>
        <name>Ni(2+)</name>
        <dbReference type="ChEBI" id="CHEBI:49786"/>
        <label>2</label>
    </ligand>
</feature>
<feature type="binding site" evidence="1">
    <location>
        <position position="362"/>
    </location>
    <ligand>
        <name>Ni(2+)</name>
        <dbReference type="ChEBI" id="CHEBI:49786"/>
        <label>1</label>
    </ligand>
</feature>
<feature type="modified residue" description="N6-carboxylysine" evidence="1">
    <location>
        <position position="219"/>
    </location>
</feature>
<reference key="1">
    <citation type="submission" date="2006-05" db="EMBL/GenBank/DDBJ databases">
        <authorList>
            <consortium name="Genoscope"/>
        </authorList>
    </citation>
    <scope>NUCLEOTIDE SEQUENCE [LARGE SCALE GENOMIC DNA]</scope>
    <source>
        <strain>RCC307</strain>
    </source>
</reference>
<sequence>MPYRIDRRTYAETYGPTTGDRVRLADTELILEVEKDYTVYGDEVKFGGGKVIRDGMGQGQTSRAAGAVDTVITNALILDWWGIVKADVGLKDGRICAIGKAGNPDISDGVTIPIGPGTEAIAGEGHILTAGGIDTHIHFICPQQIETAIASGVTTLLGGGTGPATGTNATTCTPGAFHISRMLQAADGLPVNLGFFGKGNASTPEALDEQVRAGACGLKLHEDWGTTPAAIDCCLGVADRFDVQVCIHTDTLNEAGFVEDTIAAIKGRTIHTFHTEGAGGGHAPDIIRICGETNVLPSSTNPTRPYTRNTLEEHLDMLMVCHHLDSSIPEDVAFAESRIRRETIAAEDILHDLGAFSIIASDSQAMGRVGEVITRTFQTAHKMKVQRGVLEGDNSRNDNTRLKRYIAKVTINPAIAHGLDHQVGSVEVGKLADLVLWKPGFFGVKPELVLKGGSIAWAQMGDANASIPTPGPVHGRPMFASFGGAMAPSCLTFLSQAGLDAGVPEALGLRTPCVPVQNTRGIGKAQMKNNIALPKVEVDPETYEVFADGELLTCEPAEVLPMAQRYFLL</sequence>
<proteinExistence type="inferred from homology"/>
<organism>
    <name type="scientific">Synechococcus sp. (strain RCC307)</name>
    <dbReference type="NCBI Taxonomy" id="316278"/>
    <lineage>
        <taxon>Bacteria</taxon>
        <taxon>Bacillati</taxon>
        <taxon>Cyanobacteriota</taxon>
        <taxon>Cyanophyceae</taxon>
        <taxon>Synechococcales</taxon>
        <taxon>Synechococcaceae</taxon>
        <taxon>Synechococcus</taxon>
    </lineage>
</organism>